<protein>
    <recommendedName>
        <fullName>Uncharacterized glycosyltransferase YkoT</fullName>
        <ecNumber>2.4.-.-</ecNumber>
    </recommendedName>
</protein>
<proteinExistence type="evidence at protein level"/>
<feature type="chain" id="PRO_0000059236" description="Uncharacterized glycosyltransferase YkoT">
    <location>
        <begin position="1"/>
        <end position="337"/>
    </location>
</feature>
<feature type="transmembrane region" description="Helical" evidence="1">
    <location>
        <begin position="241"/>
        <end position="261"/>
    </location>
</feature>
<feature type="transmembrane region" description="Helical" evidence="1">
    <location>
        <begin position="273"/>
        <end position="293"/>
    </location>
</feature>
<gene>
    <name type="primary">ykoT</name>
    <name type="ordered locus">BSU13390</name>
</gene>
<keyword id="KW-1003">Cell membrane</keyword>
<keyword id="KW-0328">Glycosyltransferase</keyword>
<keyword id="KW-0472">Membrane</keyword>
<keyword id="KW-1185">Reference proteome</keyword>
<keyword id="KW-0808">Transferase</keyword>
<keyword id="KW-0812">Transmembrane</keyword>
<keyword id="KW-1133">Transmembrane helix</keyword>
<comment type="interaction">
    <interactant intactId="EBI-5242987">
        <id>O34755</id>
    </interactant>
    <interactant intactId="EBI-5242378">
        <id>P71012</id>
        <label>fruA</label>
    </interactant>
    <organismsDiffer>false</organismsDiffer>
    <experiments>3</experiments>
</comment>
<comment type="interaction">
    <interactant intactId="EBI-5242987">
        <id>O34755</id>
    </interactant>
    <interactant intactId="EBI-5242442">
        <id>O31501</id>
        <label>swrC</label>
    </interactant>
    <organismsDiffer>false</organismsDiffer>
    <experiments>4</experiments>
</comment>
<comment type="subcellular location">
    <subcellularLocation>
        <location evidence="2">Cell membrane</location>
        <topology evidence="2">Multi-pass membrane protein</topology>
    </subcellularLocation>
</comment>
<comment type="similarity">
    <text evidence="2">Belongs to the glycosyltransferase 2 family.</text>
</comment>
<reference key="1">
    <citation type="journal article" date="1997" name="Nature">
        <title>The complete genome sequence of the Gram-positive bacterium Bacillus subtilis.</title>
        <authorList>
            <person name="Kunst F."/>
            <person name="Ogasawara N."/>
            <person name="Moszer I."/>
            <person name="Albertini A.M."/>
            <person name="Alloni G."/>
            <person name="Azevedo V."/>
            <person name="Bertero M.G."/>
            <person name="Bessieres P."/>
            <person name="Bolotin A."/>
            <person name="Borchert S."/>
            <person name="Borriss R."/>
            <person name="Boursier L."/>
            <person name="Brans A."/>
            <person name="Braun M."/>
            <person name="Brignell S.C."/>
            <person name="Bron S."/>
            <person name="Brouillet S."/>
            <person name="Bruschi C.V."/>
            <person name="Caldwell B."/>
            <person name="Capuano V."/>
            <person name="Carter N.M."/>
            <person name="Choi S.-K."/>
            <person name="Codani J.-J."/>
            <person name="Connerton I.F."/>
            <person name="Cummings N.J."/>
            <person name="Daniel R.A."/>
            <person name="Denizot F."/>
            <person name="Devine K.M."/>
            <person name="Duesterhoeft A."/>
            <person name="Ehrlich S.D."/>
            <person name="Emmerson P.T."/>
            <person name="Entian K.-D."/>
            <person name="Errington J."/>
            <person name="Fabret C."/>
            <person name="Ferrari E."/>
            <person name="Foulger D."/>
            <person name="Fritz C."/>
            <person name="Fujita M."/>
            <person name="Fujita Y."/>
            <person name="Fuma S."/>
            <person name="Galizzi A."/>
            <person name="Galleron N."/>
            <person name="Ghim S.-Y."/>
            <person name="Glaser P."/>
            <person name="Goffeau A."/>
            <person name="Golightly E.J."/>
            <person name="Grandi G."/>
            <person name="Guiseppi G."/>
            <person name="Guy B.J."/>
            <person name="Haga K."/>
            <person name="Haiech J."/>
            <person name="Harwood C.R."/>
            <person name="Henaut A."/>
            <person name="Hilbert H."/>
            <person name="Holsappel S."/>
            <person name="Hosono S."/>
            <person name="Hullo M.-F."/>
            <person name="Itaya M."/>
            <person name="Jones L.-M."/>
            <person name="Joris B."/>
            <person name="Karamata D."/>
            <person name="Kasahara Y."/>
            <person name="Klaerr-Blanchard M."/>
            <person name="Klein C."/>
            <person name="Kobayashi Y."/>
            <person name="Koetter P."/>
            <person name="Koningstein G."/>
            <person name="Krogh S."/>
            <person name="Kumano M."/>
            <person name="Kurita K."/>
            <person name="Lapidus A."/>
            <person name="Lardinois S."/>
            <person name="Lauber J."/>
            <person name="Lazarevic V."/>
            <person name="Lee S.-M."/>
            <person name="Levine A."/>
            <person name="Liu H."/>
            <person name="Masuda S."/>
            <person name="Mauel C."/>
            <person name="Medigue C."/>
            <person name="Medina N."/>
            <person name="Mellado R.P."/>
            <person name="Mizuno M."/>
            <person name="Moestl D."/>
            <person name="Nakai S."/>
            <person name="Noback M."/>
            <person name="Noone D."/>
            <person name="O'Reilly M."/>
            <person name="Ogawa K."/>
            <person name="Ogiwara A."/>
            <person name="Oudega B."/>
            <person name="Park S.-H."/>
            <person name="Parro V."/>
            <person name="Pohl T.M."/>
            <person name="Portetelle D."/>
            <person name="Porwollik S."/>
            <person name="Prescott A.M."/>
            <person name="Presecan E."/>
            <person name="Pujic P."/>
            <person name="Purnelle B."/>
            <person name="Rapoport G."/>
            <person name="Rey M."/>
            <person name="Reynolds S."/>
            <person name="Rieger M."/>
            <person name="Rivolta C."/>
            <person name="Rocha E."/>
            <person name="Roche B."/>
            <person name="Rose M."/>
            <person name="Sadaie Y."/>
            <person name="Sato T."/>
            <person name="Scanlan E."/>
            <person name="Schleich S."/>
            <person name="Schroeter R."/>
            <person name="Scoffone F."/>
            <person name="Sekiguchi J."/>
            <person name="Sekowska A."/>
            <person name="Seror S.J."/>
            <person name="Serror P."/>
            <person name="Shin B.-S."/>
            <person name="Soldo B."/>
            <person name="Sorokin A."/>
            <person name="Tacconi E."/>
            <person name="Takagi T."/>
            <person name="Takahashi H."/>
            <person name="Takemaru K."/>
            <person name="Takeuchi M."/>
            <person name="Tamakoshi A."/>
            <person name="Tanaka T."/>
            <person name="Terpstra P."/>
            <person name="Tognoni A."/>
            <person name="Tosato V."/>
            <person name="Uchiyama S."/>
            <person name="Vandenbol M."/>
            <person name="Vannier F."/>
            <person name="Vassarotti A."/>
            <person name="Viari A."/>
            <person name="Wambutt R."/>
            <person name="Wedler E."/>
            <person name="Wedler H."/>
            <person name="Weitzenegger T."/>
            <person name="Winters P."/>
            <person name="Wipat A."/>
            <person name="Yamamoto H."/>
            <person name="Yamane K."/>
            <person name="Yasumoto K."/>
            <person name="Yata K."/>
            <person name="Yoshida K."/>
            <person name="Yoshikawa H.-F."/>
            <person name="Zumstein E."/>
            <person name="Yoshikawa H."/>
            <person name="Danchin A."/>
        </authorList>
    </citation>
    <scope>NUCLEOTIDE SEQUENCE [LARGE SCALE GENOMIC DNA]</scope>
    <source>
        <strain>168</strain>
    </source>
</reference>
<evidence type="ECO:0000255" key="1"/>
<evidence type="ECO:0000305" key="2"/>
<accession>O34755</accession>
<name>YKOT_BACSU</name>
<organism>
    <name type="scientific">Bacillus subtilis (strain 168)</name>
    <dbReference type="NCBI Taxonomy" id="224308"/>
    <lineage>
        <taxon>Bacteria</taxon>
        <taxon>Bacillati</taxon>
        <taxon>Bacillota</taxon>
        <taxon>Bacilli</taxon>
        <taxon>Bacillales</taxon>
        <taxon>Bacillaceae</taxon>
        <taxon>Bacillus</taxon>
    </lineage>
</organism>
<sequence length="337" mass="38515">MKQSQPVLTIVVPCFNEEEVFQETSHQLTEVVDDLIEEKLIAEDSKILFVDDGSKDRTWALIAMESIRNKKVTGLKLACNVGHQKALLAGLHKAKNRSDCVISIDADLQDDISVIRDFMLKYHEGCEIVYGVRRSRKTDTFFKRTTALGFYRLMNKLGIKLIYNHADFRLMNKRSLEELERYPEANLFLRGIVPMIGFKSAEVLYDRKERFAGKTKYPLKKMLSFAFNGITSFSVAPIRFFTLLGFVLFFLSAVAGIGAFIQKLLGHTNAGWASLIISIWFLGGLQLMGIGIIGEYIGTIFSEVKRRPKYAIDIDLYNEQLSPLQRQEKERLEKKYS</sequence>
<dbReference type="EC" id="2.4.-.-"/>
<dbReference type="EMBL" id="AL009126">
    <property type="protein sequence ID" value="CAB13196.1"/>
    <property type="molecule type" value="Genomic_DNA"/>
</dbReference>
<dbReference type="PIR" id="F69860">
    <property type="entry name" value="F69860"/>
</dbReference>
<dbReference type="RefSeq" id="NP_389222.1">
    <property type="nucleotide sequence ID" value="NC_000964.3"/>
</dbReference>
<dbReference type="RefSeq" id="WP_003245533.1">
    <property type="nucleotide sequence ID" value="NZ_OZ025638.1"/>
</dbReference>
<dbReference type="SMR" id="O34755"/>
<dbReference type="FunCoup" id="O34755">
    <property type="interactions" value="553"/>
</dbReference>
<dbReference type="IntAct" id="O34755">
    <property type="interactions" value="38"/>
</dbReference>
<dbReference type="STRING" id="224308.BSU13390"/>
<dbReference type="CAZy" id="GT2">
    <property type="family name" value="Glycosyltransferase Family 2"/>
</dbReference>
<dbReference type="PaxDb" id="224308-BSU13390"/>
<dbReference type="EnsemblBacteria" id="CAB13196">
    <property type="protein sequence ID" value="CAB13196"/>
    <property type="gene ID" value="BSU_13390"/>
</dbReference>
<dbReference type="GeneID" id="939378"/>
<dbReference type="KEGG" id="bsu:BSU13390"/>
<dbReference type="PATRIC" id="fig|224308.179.peg.1454"/>
<dbReference type="eggNOG" id="COG0463">
    <property type="taxonomic scope" value="Bacteria"/>
</dbReference>
<dbReference type="InParanoid" id="O34755"/>
<dbReference type="OrthoDB" id="9807778at2"/>
<dbReference type="PhylomeDB" id="O34755"/>
<dbReference type="BioCyc" id="BSUB:BSU13390-MONOMER"/>
<dbReference type="Proteomes" id="UP000001570">
    <property type="component" value="Chromosome"/>
</dbReference>
<dbReference type="GO" id="GO:0005886">
    <property type="term" value="C:plasma membrane"/>
    <property type="evidence" value="ECO:0000318"/>
    <property type="project" value="GO_Central"/>
</dbReference>
<dbReference type="GO" id="GO:0016757">
    <property type="term" value="F:glycosyltransferase activity"/>
    <property type="evidence" value="ECO:0007669"/>
    <property type="project" value="UniProtKB-KW"/>
</dbReference>
<dbReference type="CDD" id="cd04187">
    <property type="entry name" value="DPM1_like_bac"/>
    <property type="match status" value="1"/>
</dbReference>
<dbReference type="Gene3D" id="3.90.550.10">
    <property type="entry name" value="Spore Coat Polysaccharide Biosynthesis Protein SpsA, Chain A"/>
    <property type="match status" value="1"/>
</dbReference>
<dbReference type="InterPro" id="IPR001173">
    <property type="entry name" value="Glyco_trans_2-like"/>
</dbReference>
<dbReference type="InterPro" id="IPR050256">
    <property type="entry name" value="Glycosyltransferase_2"/>
</dbReference>
<dbReference type="InterPro" id="IPR029044">
    <property type="entry name" value="Nucleotide-diphossugar_trans"/>
</dbReference>
<dbReference type="PANTHER" id="PTHR48090:SF1">
    <property type="entry name" value="PROPHAGE BACTOPRENOL GLUCOSYL TRANSFERASE HOMOLOG"/>
    <property type="match status" value="1"/>
</dbReference>
<dbReference type="PANTHER" id="PTHR48090">
    <property type="entry name" value="UNDECAPRENYL-PHOSPHATE 4-DEOXY-4-FORMAMIDO-L-ARABINOSE TRANSFERASE-RELATED"/>
    <property type="match status" value="1"/>
</dbReference>
<dbReference type="Pfam" id="PF00535">
    <property type="entry name" value="Glycos_transf_2"/>
    <property type="match status" value="1"/>
</dbReference>
<dbReference type="SUPFAM" id="SSF53448">
    <property type="entry name" value="Nucleotide-diphospho-sugar transferases"/>
    <property type="match status" value="1"/>
</dbReference>